<keyword id="KW-0025">Alternative splicing</keyword>
<keyword id="KW-0963">Cytoplasm</keyword>
<keyword id="KW-1017">Isopeptide bond</keyword>
<keyword id="KW-0576">Peroxisome</keyword>
<keyword id="KW-0597">Phosphoprotein</keyword>
<keyword id="KW-0653">Protein transport</keyword>
<keyword id="KW-1185">Reference proteome</keyword>
<keyword id="KW-0677">Repeat</keyword>
<keyword id="KW-0882">Thioester bond</keyword>
<keyword id="KW-0802">TPR repeat</keyword>
<keyword id="KW-0811">Translocation</keyword>
<keyword id="KW-0813">Transport</keyword>
<keyword id="KW-0832">Ubl conjugation</keyword>
<gene>
    <name evidence="14" type="primary">PEX5</name>
</gene>
<proteinExistence type="evidence at protein level"/>
<reference key="1">
    <citation type="journal article" date="2001" name="Biochem. Biophys. Res. Commun.">
        <title>Temperature-sensitive phenotype of Chinese hamster ovary cells defective in PEX5 gene.</title>
        <authorList>
            <person name="Ito R."/>
            <person name="Huang Y."/>
            <person name="Yao C."/>
            <person name="Shimozawa N."/>
            <person name="Suzuki Y."/>
            <person name="Kondo N."/>
            <person name="Imanaka T."/>
            <person name="Usuda N."/>
            <person name="Ito M."/>
        </authorList>
    </citation>
    <scope>NUCLEOTIDE SEQUENCE [MRNA] (ISOFORMS 1 AND 2)</scope>
    <scope>FUNCTION</scope>
    <scope>MUTAGENESIS OF GLY-343</scope>
    <source>
        <tissue>Ovary</tissue>
    </source>
</reference>
<reference key="2">
    <citation type="journal article" date="2005" name="J. Biochem.">
        <title>Identification of Pex5pM, and retarded maturation of 3-ketoacyl-CoA thiolase and acyl-CoA oxidase in CHO cells expressing mutant Pex5p isoforms.</title>
        <authorList>
            <person name="Ito R."/>
            <person name="Morita M."/>
            <person name="Takahashi N."/>
            <person name="Shimozawa N."/>
            <person name="Usuda N."/>
            <person name="Imanaka T."/>
            <person name="Ito M."/>
        </authorList>
    </citation>
    <scope>NUCLEOTIDE SEQUENCE [MRNA] (ISOFORM 3)</scope>
    <scope>FUNCTION</scope>
    <scope>SUBCELLULAR LOCATION</scope>
    <source>
        <tissue>Ovary</tissue>
    </source>
</reference>
<reference key="3">
    <citation type="journal article" date="2011" name="Nat. Biotechnol.">
        <title>The genomic sequence of the Chinese hamster ovary (CHO)-K1 cell line.</title>
        <authorList>
            <person name="Xu X."/>
            <person name="Nagarajan H."/>
            <person name="Lewis N.E."/>
            <person name="Pan S."/>
            <person name="Cai Z."/>
            <person name="Liu X."/>
            <person name="Chen W."/>
            <person name="Xie M."/>
            <person name="Wang W."/>
            <person name="Hammond S."/>
            <person name="Andersen M.R."/>
            <person name="Neff N."/>
            <person name="Passarelli B."/>
            <person name="Koh W."/>
            <person name="Fan H.C."/>
            <person name="Wang J."/>
            <person name="Gui Y."/>
            <person name="Lee K.H."/>
            <person name="Betenbaugh M.J."/>
            <person name="Quake S.R."/>
            <person name="Famili I."/>
            <person name="Palsson B.O."/>
            <person name="Wang J."/>
        </authorList>
    </citation>
    <scope>NUCLEOTIDE SEQUENCE [LARGE SCALE GENOMIC DNA]</scope>
</reference>
<reference key="4">
    <citation type="journal article" date="2000" name="J. Biol. Chem.">
        <title>The mammalian peroxin Pex5pL, the longer isoform of the mobile peroxisome targeting signal (PTS) type 1 transporter, translocates the Pex7p.PTS2 protein complex into peroxisomes via its initial docking site, Pex14p.</title>
        <authorList>
            <person name="Otera H."/>
            <person name="Harano T."/>
            <person name="Honsho M."/>
            <person name="Ghaedi K."/>
            <person name="Mukai S."/>
            <person name="Tanaka A."/>
            <person name="Kawai A."/>
            <person name="Shimizu N."/>
            <person name="Fujiki Y."/>
        </authorList>
    </citation>
    <scope>FUNCTION (ISOFORM 1)</scope>
    <scope>INTERACTION WITH PEX7 (ISOFORM 1)</scope>
    <scope>MUTAGENESIS OF GLY-343 AND GLY-530</scope>
</reference>
<reference key="5">
    <citation type="journal article" date="2000" name="J. Biol. Chem.">
        <title>Disruption of the interaction of the longer isoform of Pex5p, Pex5pL, with Pex7p abolishes peroxisome targeting signal type 2 protein import in mammals. Study with a novel Pex5-impaired Chinese hamster ovary cell mutant.</title>
        <authorList>
            <person name="Matsumura T."/>
            <person name="Otera H."/>
            <person name="Fujiki Y."/>
        </authorList>
    </citation>
    <scope>FUNCTION (ISOFORM 1)</scope>
    <scope>INTERACTION WITH PEX7 (ISOFORM 1)</scope>
    <scope>MUTAGENESIS OF SER-214</scope>
</reference>
<reference key="6">
    <citation type="journal article" date="2002" name="Mol. Cell. Biol.">
        <title>Peroxisomal targeting signal receptor Pex5p interacts with cargoes and import machinery components in a spatiotemporally differentiated manner: conserved Pex5p WXXXF/Y motifs are critical for matrix protein import.</title>
        <authorList>
            <person name="Otera H."/>
            <person name="Setoguchi K."/>
            <person name="Hamasaki M."/>
            <person name="Kumashiro T."/>
            <person name="Shimizu N."/>
            <person name="Fujiki Y."/>
        </authorList>
    </citation>
    <scope>FUNCTION</scope>
    <scope>INTERACTION WITH PEX7; PEX13 AND PEX14</scope>
    <scope>DOMAIN</scope>
</reference>
<reference key="7">
    <citation type="journal article" date="2005" name="Mol. Cell. Biol.">
        <title>Shuttling mechanism of peroxisome targeting signal type 1 receptor Pex5: ATP-independent import and ATP-dependent export.</title>
        <authorList>
            <person name="Miyata N."/>
            <person name="Fujiki Y."/>
        </authorList>
    </citation>
    <scope>FUNCTION</scope>
    <scope>SUBCELLULAR LOCATION</scope>
</reference>
<reference key="8">
    <citation type="journal article" date="2006" name="J. Biol. Chem.">
        <title>Molecular mechanisms of import of peroxisome-targeting signal type 2 (PTS2) proteins by PTS2 receptor Pex7p and PTS1 receptor Pex5pL.</title>
        <authorList>
            <person name="Mukai S."/>
            <person name="Fujiki Y."/>
        </authorList>
    </citation>
    <scope>FUNCTION (ISOFORM 1)</scope>
    <scope>INTERACTION WITH PEX7 (ISOFORM 1)</scope>
</reference>
<reference key="9">
    <citation type="journal article" date="2011" name="Traffic">
        <title>Cysteine ubiquitination of PTS1 receptor Pex5p regulates Pex5p recycling.</title>
        <authorList>
            <person name="Okumoto K."/>
            <person name="Misono S."/>
            <person name="Miyata N."/>
            <person name="Matsumoto Y."/>
            <person name="Mukai S."/>
            <person name="Fujiki Y."/>
        </authorList>
    </citation>
    <scope>UBIQUITINATION AT CYS-11</scope>
    <scope>MUTAGENESIS OF CYS-11</scope>
</reference>
<reference key="10">
    <citation type="journal article" date="2018" name="J. Biochem.">
        <title>A newly isolated Pex7-binding, atypical PTS2 protein P7BP2 is a novel dynein-type AAA+ protein.</title>
        <authorList>
            <person name="Niwa H."/>
            <person name="Miyauchi-Nanri Y."/>
            <person name="Okumoto K."/>
            <person name="Mukai S."/>
            <person name="Noi K."/>
            <person name="Ogura T."/>
            <person name="Fujiki Y."/>
        </authorList>
    </citation>
    <scope>FUNCTION (ISOFORM 1)</scope>
    <scope>INTERACTION WITH VWA8 (ISOFORM 1)</scope>
</reference>
<sequence length="640" mass="70834">MAMRELVEGECGGANPLMKLATHFTQDKALRQEGLRPGPWPPGASAAETVSKPLGVGSEDELVAEFLQDQNAPLVSRAPQTFKMDDLLAEMQEIEQSNFRQAPQRAPGVADLALSENWAQEFLAAGDAVDVAQDYNETDWSQEFIAEVTDPLSVSPARWAEEYLEQSEEKLWLGEPEGSSTTDRWYDDYHPEEDLQHTASDFVSKVDDPKLANSEFLKFVRQIGEGQVSLESAAGSGRAQAEQWAAEFIQQQGTSEAWVDQFTRSGNTSALDVEFERAKSAIESDVDFWDKLQAELEEMAKRDAEAHPWLSDYDDLTSASYDKGYQFEEENPLRDHPQAFEEGLRRLEEGDLPNAVLLFEAAVQQDPKHMEAWQYLGTTQAENEQELLAISALRRCLELKPDNRTALMALAVSFTNESLQRQACETLRDWLRYSPAYAHLVTPGEEGASGAGLGPSKRVLGSLLSDSLFLEVKELFLAAVRLDPTSIDPDVQCGLGVLFNLSGEYDKAVDCFTAALSVRPNDYLLWNKLGATLANGNQSEEAVAAYRRALELQPGYIRSRYNLGISCINLGAHREAVEHFLEALNMQRKSRGPRGEGGAMSENIWSTLRLALSMLGQSDAYGAADARDLSALLAMFGLPQ</sequence>
<feature type="chain" id="PRO_0000285543" description="Peroxisomal targeting signal 1 receptor">
    <location>
        <begin position="1"/>
        <end position="640"/>
    </location>
</feature>
<feature type="repeat" description="TPR 1">
    <location>
        <begin position="336"/>
        <end position="369"/>
    </location>
</feature>
<feature type="repeat" description="TPR 2">
    <location>
        <begin position="371"/>
        <end position="403"/>
    </location>
</feature>
<feature type="repeat" description="TPR 3">
    <location>
        <begin position="404"/>
        <end position="437"/>
    </location>
</feature>
<feature type="repeat" description="TPR 4">
    <location>
        <begin position="454"/>
        <end position="486"/>
    </location>
</feature>
<feature type="repeat" description="TPR 5">
    <location>
        <begin position="489"/>
        <end position="522"/>
    </location>
</feature>
<feature type="repeat" description="TPR 6">
    <location>
        <begin position="524"/>
        <end position="556"/>
    </location>
</feature>
<feature type="repeat" description="TPR 7">
    <location>
        <begin position="558"/>
        <end position="590"/>
    </location>
</feature>
<feature type="region of interest" description="Amphipathic helix 1 (AH1)" evidence="1">
    <location>
        <begin position="11"/>
        <end position="33"/>
    </location>
</feature>
<feature type="region of interest" description="Amphipathic helix 2 (AH2)" evidence="1">
    <location>
        <begin position="81"/>
        <end position="99"/>
    </location>
</feature>
<feature type="region of interest" description="Amphipathic helix 3 (AH3)" evidence="1">
    <location>
        <begin position="191"/>
        <end position="207"/>
    </location>
</feature>
<feature type="region of interest" description="Amphipathic helix 4 (AH4)" evidence="1">
    <location>
        <begin position="285"/>
        <end position="301"/>
    </location>
</feature>
<feature type="short sequence motif" description="LVxEF motif" evidence="3">
    <location>
        <begin position="62"/>
        <end position="66"/>
    </location>
</feature>
<feature type="short sequence motif" description="WxxxF/Y motif 1" evidence="7">
    <location>
        <begin position="118"/>
        <end position="122"/>
    </location>
</feature>
<feature type="short sequence motif" description="WxxxF/Y motif 2" evidence="7">
    <location>
        <begin position="140"/>
        <end position="144"/>
    </location>
</feature>
<feature type="short sequence motif" description="WxxxF/Y motif 3" evidence="7">
    <location>
        <begin position="159"/>
        <end position="163"/>
    </location>
</feature>
<feature type="short sequence motif" description="WxxxF/Y motif 4" evidence="7">
    <location>
        <begin position="185"/>
        <end position="189"/>
    </location>
</feature>
<feature type="short sequence motif" description="WxxxF/Y motif 5" evidence="7">
    <location>
        <begin position="244"/>
        <end position="248"/>
    </location>
</feature>
<feature type="short sequence motif" description="WxxxF/Y motif 6" evidence="7">
    <location>
        <begin position="258"/>
        <end position="262"/>
    </location>
</feature>
<feature type="short sequence motif" description="WxxxF/Y motif 7" evidence="7">
    <location>
        <begin position="309"/>
        <end position="313"/>
    </location>
</feature>
<feature type="site" description="Sensor of redox state" evidence="3">
    <location>
        <position position="11"/>
    </location>
</feature>
<feature type="modified residue" description="Phosphoserine" evidence="3">
    <location>
        <position position="115"/>
    </location>
</feature>
<feature type="modified residue" description="Phosphoserine" evidence="3">
    <location>
        <position position="141"/>
    </location>
</feature>
<feature type="modified residue" description="Phosphoserine" evidence="3">
    <location>
        <position position="153"/>
    </location>
</feature>
<feature type="modified residue" description="Phosphoserine" evidence="3">
    <location>
        <position position="155"/>
    </location>
</feature>
<feature type="modified residue" description="Phosphoserine" evidence="3">
    <location>
        <position position="167"/>
    </location>
</feature>
<feature type="modified residue" description="Phosphoserine" evidence="3">
    <location>
        <position position="280"/>
    </location>
</feature>
<feature type="cross-link" description="Glycyl cysteine thioester (Cys-Gly) (interchain with G-Cter in ubiquitin)" evidence="11">
    <location>
        <position position="11"/>
    </location>
</feature>
<feature type="cross-link" description="Glycyl lysine isopeptide (Lys-Gly) (interchain with G-Cter in ubiquitin)" evidence="3">
    <location>
        <position position="210"/>
    </location>
</feature>
<feature type="cross-link" description="Glycyl lysine isopeptide (Lys-Gly) (interchain with G-Cter in ubiquitin)" evidence="3">
    <location>
        <position position="473"/>
    </location>
</feature>
<feature type="cross-link" description="Glycyl lysine isopeptide (Lys-Gly) (interchain with G-Cter in ubiquitin)" evidence="3">
    <location>
        <position position="528"/>
    </location>
</feature>
<feature type="splice variant" id="VSP_024717" description="In isoform 2." evidence="14">
    <location>
        <begin position="216"/>
        <end position="252"/>
    </location>
</feature>
<feature type="splice variant" id="VSP_024716" description="In isoform 3." evidence="15">
    <location>
        <begin position="216"/>
        <end position="222"/>
    </location>
</feature>
<feature type="mutagenesis site" description="Acumulates in peroxisomes and abrogates peroxisomal import of PTS1- and PTS2-containing proteins." evidence="11">
    <original>C</original>
    <variation>A</variation>
    <location>
        <position position="11"/>
    </location>
</feature>
<feature type="mutagenesis site" description="In ZPG231 mutant; abolished interaction with PEX7; impaired ability to mediate peroxisomal import of proteins containing a C-terminal PTS2-type targeting signal without affecting import of proteins with a PTS1 targeting signal." evidence="5">
    <original>S</original>
    <variation>F</variation>
    <location>
        <position position="214"/>
    </location>
</feature>
<feature type="mutagenesis site" description="In ZP105 mutant CHO cells; loss of peroxisomal import at 37 degrees Celsius for proteins with type-1 and type-2 targeting sequences (PTS1 and PTS2). Does not affect interaction with PEX7." evidence="4 6">
    <original>G</original>
    <variation>R</variation>
    <location>
        <position position="343"/>
    </location>
</feature>
<feature type="mutagenesis site" description="In ZP139 mutant CHO cells; loss of peroxisomal import at 37 degrees Celsius for proteins with type-1 targeting sequences (PTS1) without affecting peroxisomal import of type-2 targeting sequences (PTS2). Does not affect interaction with PEX7." evidence="6">
    <original>G</original>
    <variation>E</variation>
    <location>
        <position position="530"/>
    </location>
</feature>
<organism>
    <name type="scientific">Cricetulus griseus</name>
    <name type="common">Chinese hamster</name>
    <name type="synonym">Cricetulus barabensis griseus</name>
    <dbReference type="NCBI Taxonomy" id="10029"/>
    <lineage>
        <taxon>Eukaryota</taxon>
        <taxon>Metazoa</taxon>
        <taxon>Chordata</taxon>
        <taxon>Craniata</taxon>
        <taxon>Vertebrata</taxon>
        <taxon>Euteleostomi</taxon>
        <taxon>Mammalia</taxon>
        <taxon>Eutheria</taxon>
        <taxon>Euarchontoglires</taxon>
        <taxon>Glires</taxon>
        <taxon>Rodentia</taxon>
        <taxon>Myomorpha</taxon>
        <taxon>Muroidea</taxon>
        <taxon>Cricetidae</taxon>
        <taxon>Cricetinae</taxon>
        <taxon>Cricetulus</taxon>
    </lineage>
</organism>
<evidence type="ECO:0000250" key="1">
    <source>
        <dbReference type="UniProtKB" id="A0A1L8FDW4"/>
    </source>
</evidence>
<evidence type="ECO:0000250" key="2">
    <source>
        <dbReference type="UniProtKB" id="P35056"/>
    </source>
</evidence>
<evidence type="ECO:0000250" key="3">
    <source>
        <dbReference type="UniProtKB" id="P50542"/>
    </source>
</evidence>
<evidence type="ECO:0000269" key="4">
    <source>
    </source>
</evidence>
<evidence type="ECO:0000269" key="5">
    <source>
    </source>
</evidence>
<evidence type="ECO:0000269" key="6">
    <source>
    </source>
</evidence>
<evidence type="ECO:0000269" key="7">
    <source>
    </source>
</evidence>
<evidence type="ECO:0000269" key="8">
    <source>
    </source>
</evidence>
<evidence type="ECO:0000269" key="9">
    <source>
    </source>
</evidence>
<evidence type="ECO:0000269" key="10">
    <source>
    </source>
</evidence>
<evidence type="ECO:0000269" key="11">
    <source>
    </source>
</evidence>
<evidence type="ECO:0000269" key="12">
    <source>
    </source>
</evidence>
<evidence type="ECO:0000303" key="13">
    <source>
    </source>
</evidence>
<evidence type="ECO:0000303" key="14">
    <source>
    </source>
</evidence>
<evidence type="ECO:0000303" key="15">
    <source>
    </source>
</evidence>
<evidence type="ECO:0000305" key="16"/>
<protein>
    <recommendedName>
        <fullName>Peroxisomal targeting signal 1 receptor</fullName>
        <shortName>PTS1 receptor</shortName>
        <shortName>PTS1R</shortName>
    </recommendedName>
    <alternativeName>
        <fullName>PTS1-BP</fullName>
    </alternativeName>
    <alternativeName>
        <fullName evidence="16">Peroxin-5</fullName>
    </alternativeName>
    <alternativeName>
        <fullName>Peroxisomal C-terminal targeting signal import receptor</fullName>
    </alternativeName>
    <alternativeName>
        <fullName>Peroxisome receptor 1</fullName>
    </alternativeName>
</protein>
<name>PEX5_CRIGR</name>
<dbReference type="EMBL" id="AB065000">
    <property type="protein sequence ID" value="BAB69071.1"/>
    <property type="molecule type" value="mRNA"/>
</dbReference>
<dbReference type="EMBL" id="AB063320">
    <property type="protein sequence ID" value="BAB69070.1"/>
    <property type="molecule type" value="mRNA"/>
</dbReference>
<dbReference type="EMBL" id="AB098709">
    <property type="protein sequence ID" value="BAC81427.1"/>
    <property type="molecule type" value="mRNA"/>
</dbReference>
<dbReference type="EMBL" id="JH000031">
    <property type="protein sequence ID" value="EGV98563.1"/>
    <property type="molecule type" value="Genomic_DNA"/>
</dbReference>
<dbReference type="RefSeq" id="NP_001230930.1">
    <molecule id="Q920N5-1"/>
    <property type="nucleotide sequence ID" value="NM_001244001.1"/>
</dbReference>
<dbReference type="RefSeq" id="XP_007644336.1">
    <molecule id="Q920N5-2"/>
    <property type="nucleotide sequence ID" value="XM_007646146.2"/>
</dbReference>
<dbReference type="SMR" id="Q920N5"/>
<dbReference type="IntAct" id="Q920N5">
    <property type="interactions" value="26"/>
</dbReference>
<dbReference type="PaxDb" id="10029-NP_001230930.1"/>
<dbReference type="Ensembl" id="ENSCGRT00001026058.1">
    <molecule id="Q920N5-1"/>
    <property type="protein sequence ID" value="ENSCGRP00001021814.1"/>
    <property type="gene ID" value="ENSCGRG00001020537.1"/>
</dbReference>
<dbReference type="Ensembl" id="ENSCGRT00001026072.1">
    <molecule id="Q920N5-2"/>
    <property type="protein sequence ID" value="ENSCGRP00001021828.1"/>
    <property type="gene ID" value="ENSCGRG00001020537.1"/>
</dbReference>
<dbReference type="GeneID" id="100689015"/>
<dbReference type="KEGG" id="cge:100689015"/>
<dbReference type="CTD" id="5830"/>
<dbReference type="eggNOG" id="KOG1125">
    <property type="taxonomic scope" value="Eukaryota"/>
</dbReference>
<dbReference type="GeneTree" id="ENSGT00940000156605"/>
<dbReference type="InParanoid" id="G3GUR5"/>
<dbReference type="OMA" id="NYRMKGP"/>
<dbReference type="OrthoDB" id="10006023at2759"/>
<dbReference type="Proteomes" id="UP000001075">
    <property type="component" value="Unassembled WGS sequence"/>
</dbReference>
<dbReference type="Proteomes" id="UP000694386">
    <property type="component" value="Unplaced"/>
</dbReference>
<dbReference type="Proteomes" id="UP001108280">
    <property type="component" value="Chromosome 8"/>
</dbReference>
<dbReference type="GO" id="GO:0005829">
    <property type="term" value="C:cytosol"/>
    <property type="evidence" value="ECO:0000314"/>
    <property type="project" value="UniProtKB"/>
</dbReference>
<dbReference type="GO" id="GO:0005794">
    <property type="term" value="C:Golgi apparatus"/>
    <property type="evidence" value="ECO:0007669"/>
    <property type="project" value="Ensembl"/>
</dbReference>
<dbReference type="GO" id="GO:0005739">
    <property type="term" value="C:mitochondrion"/>
    <property type="evidence" value="ECO:0007669"/>
    <property type="project" value="GOC"/>
</dbReference>
<dbReference type="GO" id="GO:0005782">
    <property type="term" value="C:peroxisomal matrix"/>
    <property type="evidence" value="ECO:0000250"/>
    <property type="project" value="UniProtKB"/>
</dbReference>
<dbReference type="GO" id="GO:0005778">
    <property type="term" value="C:peroxisomal membrane"/>
    <property type="evidence" value="ECO:0007669"/>
    <property type="project" value="TreeGrafter"/>
</dbReference>
<dbReference type="GO" id="GO:0005777">
    <property type="term" value="C:peroxisome"/>
    <property type="evidence" value="ECO:0000250"/>
    <property type="project" value="UniProtKB"/>
</dbReference>
<dbReference type="GO" id="GO:0032991">
    <property type="term" value="C:protein-containing complex"/>
    <property type="evidence" value="ECO:0007669"/>
    <property type="project" value="Ensembl"/>
</dbReference>
<dbReference type="GO" id="GO:0005052">
    <property type="term" value="F:peroxisome matrix targeting signal-1 binding"/>
    <property type="evidence" value="ECO:0000250"/>
    <property type="project" value="UniProtKB"/>
</dbReference>
<dbReference type="GO" id="GO:0033328">
    <property type="term" value="F:peroxisome membrane targeting sequence binding"/>
    <property type="evidence" value="ECO:0007669"/>
    <property type="project" value="Ensembl"/>
</dbReference>
<dbReference type="GO" id="GO:0140597">
    <property type="term" value="F:protein carrier chaperone"/>
    <property type="evidence" value="ECO:0000314"/>
    <property type="project" value="UniProtKB"/>
</dbReference>
<dbReference type="GO" id="GO:0031267">
    <property type="term" value="F:small GTPase binding"/>
    <property type="evidence" value="ECO:0007669"/>
    <property type="project" value="Ensembl"/>
</dbReference>
<dbReference type="GO" id="GO:0048468">
    <property type="term" value="P:cell development"/>
    <property type="evidence" value="ECO:0007669"/>
    <property type="project" value="Ensembl"/>
</dbReference>
<dbReference type="GO" id="GO:0034614">
    <property type="term" value="P:cellular response to reactive oxygen species"/>
    <property type="evidence" value="ECO:0007669"/>
    <property type="project" value="Ensembl"/>
</dbReference>
<dbReference type="GO" id="GO:0021795">
    <property type="term" value="P:cerebral cortex cell migration"/>
    <property type="evidence" value="ECO:0007669"/>
    <property type="project" value="Ensembl"/>
</dbReference>
<dbReference type="GO" id="GO:0021895">
    <property type="term" value="P:cerebral cortex neuron differentiation"/>
    <property type="evidence" value="ECO:0007669"/>
    <property type="project" value="Ensembl"/>
</dbReference>
<dbReference type="GO" id="GO:0007029">
    <property type="term" value="P:endoplasmic reticulum organization"/>
    <property type="evidence" value="ECO:0007669"/>
    <property type="project" value="Ensembl"/>
</dbReference>
<dbReference type="GO" id="GO:0006635">
    <property type="term" value="P:fatty acid beta-oxidation"/>
    <property type="evidence" value="ECO:0007669"/>
    <property type="project" value="Ensembl"/>
</dbReference>
<dbReference type="GO" id="GO:0007006">
    <property type="term" value="P:mitochondrial membrane organization"/>
    <property type="evidence" value="ECO:0007669"/>
    <property type="project" value="Ensembl"/>
</dbReference>
<dbReference type="GO" id="GO:0031333">
    <property type="term" value="P:negative regulation of protein-containing complex assembly"/>
    <property type="evidence" value="ECO:0007669"/>
    <property type="project" value="Ensembl"/>
</dbReference>
<dbReference type="GO" id="GO:0050905">
    <property type="term" value="P:neuromuscular process"/>
    <property type="evidence" value="ECO:0007669"/>
    <property type="project" value="Ensembl"/>
</dbReference>
<dbReference type="GO" id="GO:0001764">
    <property type="term" value="P:neuron migration"/>
    <property type="evidence" value="ECO:0007669"/>
    <property type="project" value="Ensembl"/>
</dbReference>
<dbReference type="GO" id="GO:0000425">
    <property type="term" value="P:pexophagy"/>
    <property type="evidence" value="ECO:0000250"/>
    <property type="project" value="UniProtKB"/>
</dbReference>
<dbReference type="GO" id="GO:0040018">
    <property type="term" value="P:positive regulation of multicellular organism growth"/>
    <property type="evidence" value="ECO:0007669"/>
    <property type="project" value="Ensembl"/>
</dbReference>
<dbReference type="GO" id="GO:0016558">
    <property type="term" value="P:protein import into peroxisome matrix"/>
    <property type="evidence" value="ECO:0000314"/>
    <property type="project" value="UniProtKB"/>
</dbReference>
<dbReference type="GO" id="GO:0016560">
    <property type="term" value="P:protein import into peroxisome matrix, docking"/>
    <property type="evidence" value="ECO:0007669"/>
    <property type="project" value="Ensembl"/>
</dbReference>
<dbReference type="GO" id="GO:0016562">
    <property type="term" value="P:protein import into peroxisome matrix, receptor recycling"/>
    <property type="evidence" value="ECO:0000250"/>
    <property type="project" value="UniProtKB"/>
</dbReference>
<dbReference type="GO" id="GO:0044721">
    <property type="term" value="P:protein import into peroxisome matrix, substrate release"/>
    <property type="evidence" value="ECO:0000250"/>
    <property type="project" value="UniProtKB"/>
</dbReference>
<dbReference type="GO" id="GO:0045046">
    <property type="term" value="P:protein import into peroxisome membrane"/>
    <property type="evidence" value="ECO:0007669"/>
    <property type="project" value="Ensembl"/>
</dbReference>
<dbReference type="GO" id="GO:0051262">
    <property type="term" value="P:protein tetramerization"/>
    <property type="evidence" value="ECO:0000250"/>
    <property type="project" value="UniProtKB"/>
</dbReference>
<dbReference type="GO" id="GO:0000038">
    <property type="term" value="P:very long-chain fatty acid metabolic process"/>
    <property type="evidence" value="ECO:0007669"/>
    <property type="project" value="Ensembl"/>
</dbReference>
<dbReference type="FunFam" id="1.25.40.10:FF:000034">
    <property type="entry name" value="Peroxisomal biogenesis factor 5 isoform 1"/>
    <property type="match status" value="1"/>
</dbReference>
<dbReference type="Gene3D" id="1.25.40.10">
    <property type="entry name" value="Tetratricopeptide repeat domain"/>
    <property type="match status" value="1"/>
</dbReference>
<dbReference type="InterPro" id="IPR024111">
    <property type="entry name" value="PEX5/PEX5L"/>
</dbReference>
<dbReference type="InterPro" id="IPR011990">
    <property type="entry name" value="TPR-like_helical_dom_sf"/>
</dbReference>
<dbReference type="InterPro" id="IPR019734">
    <property type="entry name" value="TPR_rpt"/>
</dbReference>
<dbReference type="PANTHER" id="PTHR10130:SF2">
    <property type="entry name" value="PEROXISOMAL TARGETING SIGNAL 1 RECEPTOR"/>
    <property type="match status" value="1"/>
</dbReference>
<dbReference type="PANTHER" id="PTHR10130">
    <property type="entry name" value="PEROXISOMAL TARGETING SIGNAL 1 RECEPTOR PEX5"/>
    <property type="match status" value="1"/>
</dbReference>
<dbReference type="Pfam" id="PF13432">
    <property type="entry name" value="TPR_16"/>
    <property type="match status" value="2"/>
</dbReference>
<dbReference type="Pfam" id="PF13181">
    <property type="entry name" value="TPR_8"/>
    <property type="match status" value="1"/>
</dbReference>
<dbReference type="SMART" id="SM00028">
    <property type="entry name" value="TPR"/>
    <property type="match status" value="4"/>
</dbReference>
<dbReference type="SUPFAM" id="SSF48452">
    <property type="entry name" value="TPR-like"/>
    <property type="match status" value="1"/>
</dbReference>
<dbReference type="PROSITE" id="PS50005">
    <property type="entry name" value="TPR"/>
    <property type="match status" value="5"/>
</dbReference>
<dbReference type="PROSITE" id="PS50293">
    <property type="entry name" value="TPR_REGION"/>
    <property type="match status" value="1"/>
</dbReference>
<comment type="function">
    <text evidence="3 6 7 8 9">Receptor that mediates peroxisomal import of proteins containing a C-terminal PTS1-type tripeptide peroxisomal targeting signal (SKL-type) (PubMed:11606046, PubMed:11865044, PubMed:16314507, PubMed:16428307). Binds to cargo proteins containing a PTS1 peroxisomal targeting signal in the cytosol, and translocates them into the peroxisome matrix by passing through the PEX13-PEX14 docking complex along with cargo proteins (PubMed:11865044). PEX5 receptor is then retrotranslocated into the cytosol, leading to release of bound cargo in the peroxisome matrix, and reset for a subsequent peroxisome import cycle (By similarity).</text>
</comment>
<comment type="function">
    <molecule>Isoform 1</molecule>
    <text evidence="4 5 10 12">In addition to promoting peroxisomal translocation of proteins containing a PTS1 peroxisomal targeting signal, mediates peroxisomal import of proteins containing a C-terminal PTS2-type peroxisomal targeting signal via its interaction with PEX7 (PubMed:10767286, PubMed:10767287, PubMed:17040904, PubMed:30204880). Interaction with PEX7 only takes place when PEX7 is associated with cargo proteins containing a PTS2 peroxisomal targeting signal (PubMed:10767286, PubMed:17040904). PEX7 along with PTS2-containing cargo proteins are then translocated through the PEX13-PEX14 docking complex together with PEX5 (PubMed:10767286, PubMed:17040904).</text>
</comment>
<comment type="function">
    <molecule>Isoform 3</molecule>
    <text evidence="4">Does not mediate translocation of peroxisomal import of proteins containing a C-terminal PTS2-type peroxisomal targeting signal.</text>
</comment>
<comment type="activity regulation">
    <text evidence="3">Cys-11 acts as a sensor of redox state. In response to oxidative stress, monoubiquitination at Cys-11 is prevented.</text>
</comment>
<comment type="subunit">
    <text evidence="3 7">Interacts (via WxxxF/Y and LVxEF motifs) with PEX14; promoting translocation through the PEX13-PEX14 docking complex (PubMed:11865044). Interacts with PEX12 (By similarity). Interacts (Cys-linked ubiquitinated) with ZFAND6 (By similarity). Interacts (when ubiquitinated at Lys-210) with p62/SQSTM1 (By similarity). Interacts with DDO; the interaction is direct and required for localization of DDO to the peroxisome (By similarity).</text>
</comment>
<comment type="subunit">
    <molecule>Isoform 1</molecule>
    <text evidence="4 5 7 10 12">Interacts with PEX7, promoting peroxisomal import of proteins containing a C-terminal PTS2-type peroxisomal targeting signal (PubMed:10767286, PubMed:10767287, PubMed:11865044, PubMed:17040904). Interacts with isoform 2 of VWA8 in a PEX7-dependent manner (PubMed:30204880).</text>
</comment>
<comment type="subcellular location">
    <subcellularLocation>
        <location evidence="8 9 10">Cytoplasm</location>
        <location evidence="8 9 10">Cytosol</location>
    </subcellularLocation>
    <subcellularLocation>
        <location evidence="8 9">Peroxisome matrix</location>
    </subcellularLocation>
    <text evidence="1 3">Cycles between the cytosol and the peroxisome matrix (By similarity). Following binding to cargo proteins containing a PTS1 peroxisomal targeting signal in the cytosol, recruited to the docking complex, composed of PEX13 and PEX14, leading to translocation into the peroxisome matrix along with cargo proteins. Export and recycling to the cytosol is initiated by binding to the PEX2-PEX10-PEX12 ligase complex via its unstructured N-terminus that inserts into the ligase pore and emerges in the cytosol (By similarity). Cys-11 of PEX5 is then monoubiquitinated, promoting its extraction from peroxisomal membrane by the PEX1-PEX6 AAA ATPase complex (By similarity). Extraction is accompanied by unfolding of the TPR repeats and release of bound cargo in the peroxisome matrix (By similarity). The TPR repeats refold in the cytosol and ubiquitination is removed by deubiquitinating enzymes, resetting PEX5 for a subsequent import cycle (By similarity).</text>
</comment>
<comment type="alternative products">
    <event type="alternative splicing"/>
    <isoform>
        <id>Q920N5-1</id>
        <name>1</name>
        <name evidence="13">Pex5pL</name>
        <name>PTS1RL</name>
        <sequence type="displayed"/>
    </isoform>
    <isoform>
        <id>Q920N5-2</id>
        <name>2</name>
        <name>Pex5pM</name>
        <name>PTS1RM</name>
        <sequence type="described" ref="VSP_024717"/>
    </isoform>
    <isoform>
        <id>Q920N5-3</id>
        <name>3</name>
        <name evidence="13">Pex5pS</name>
        <name>PTS1RS</name>
        <sequence type="described" ref="VSP_024716"/>
    </isoform>
</comment>
<comment type="domain">
    <text evidence="3">The TPR repeats mediate interaction with proteins containing a C-terminal PTS1-type tripeptide peroxisomal targeting signal (SKL-type).</text>
</comment>
<comment type="domain">
    <text evidence="7">The WxxxF/Y motifs mediate interaction with PEX14, promoting association with the PEX13-PEX14 docking complex.</text>
</comment>
<comment type="domain">
    <text evidence="1">The amphipathic helix 1 and 2 (AH1 and AH2, respectively) are required for PEX5 retrotranslocation and recycling. AH2 mediates interaction with lumenal side of the PEX2-PEX10-PEX12 ligase complex, while AH1 is required for extraction from peroxisomal membrane by the PEX1-PEX6 AAA ATPase complex.</text>
</comment>
<comment type="PTM">
    <text evidence="2 3 11">Monoubiquitinated at Cys-11 by PEX2 during PEX5 passage through the retrotranslocation channel (By similarity). Cys-11 monoubiquitination acts as a recognition signal for the PEX1-PEX6 complex and is required for PEX5 extraction and export from peroxisomes (PubMed:21554508). Monoubiquitination at Cys-11 is removed by USP9X in the cytosol, resetting PEX5 for a subsequent import cycle (By similarity). When PEX5 recycling is compromised, polyubiquitinated by PEX10 during its passage through the retrotranslocation channel, leading to its degradation (By similarity). Monoubiquitination at Lys-473 by TRIM37 promotes its stability by preventing its polyubiquitination and degradation by the proteasome (By similarity). Ubiquitination at Lys-528 is not mediated by the PEX2-PEX10-PEX12 ligase complex and is not related to PEX5 recycling (By similarity). Monoubiquitinated at Lys-210 by PEX2 following phosphorylation by ATM in response to starvation or reactive oxygen species (ROS), leading to PEX5 recognition by p62/SQSTM1 and induction of pexophagy (By similarity).</text>
</comment>
<comment type="PTM">
    <text evidence="3">Phosphorylated at Ser-141 by ATM in response to reactive oxygen species (ROS), promoting monoubiquitination at Lys-210 and induction of pexophagy.</text>
</comment>
<comment type="similarity">
    <text evidence="16">Belongs to the peroxisomal targeting signal receptor family.</text>
</comment>
<accession>Q920N5</accession>
<accession>G3GUR5</accession>
<accession>Q7TNJ1</accession>
<accession>Q920N3</accession>